<proteinExistence type="inferred from homology"/>
<sequence>MLYSCLASKTTFHFAAGLCSGLTSSILLQPADLLKTRVQQSQKTASLLPTIKTILSSPHPIRGLWRGTLPSALRTGFGSALYFTSLNALRQGLAQTEAAMAIAASSSDGKSRTSSSALPKLSNWGNLATGAVARTAAGFVMMPVTVLKVRYESDYYAYRSLYSAGRDIVRTEGVRGLFSGFGATAARDAPYAGLYVLFYEQLKRRLALVASSEQSEQPLKSTSSSSINFVSGGLAAGLATAITNPFDAVKTRLQLMPGKYGNMIRAVRLMIREDGVRSLFGGLGLRITRKALSSALAWTVYEELILRAEARWAEKDKIDL</sequence>
<dbReference type="EMBL" id="DS499598">
    <property type="protein sequence ID" value="EDP50593.1"/>
    <property type="molecule type" value="Genomic_DNA"/>
</dbReference>
<dbReference type="SMR" id="B0Y4J4"/>
<dbReference type="EnsemblFungi" id="EDP50593">
    <property type="protein sequence ID" value="EDP50593"/>
    <property type="gene ID" value="AFUB_069300"/>
</dbReference>
<dbReference type="VEuPathDB" id="FungiDB:AFUB_069300"/>
<dbReference type="HOGENOM" id="CLU_015166_0_3_1"/>
<dbReference type="OrthoDB" id="109798at5052"/>
<dbReference type="PhylomeDB" id="B0Y4J4"/>
<dbReference type="Proteomes" id="UP000001699">
    <property type="component" value="Unassembled WGS sequence"/>
</dbReference>
<dbReference type="GO" id="GO:0005743">
    <property type="term" value="C:mitochondrial inner membrane"/>
    <property type="evidence" value="ECO:0007669"/>
    <property type="project" value="UniProtKB-SubCell"/>
</dbReference>
<dbReference type="GO" id="GO:0015187">
    <property type="term" value="F:glycine transmembrane transporter activity"/>
    <property type="evidence" value="ECO:0007669"/>
    <property type="project" value="UniProtKB-UniRule"/>
</dbReference>
<dbReference type="GO" id="GO:1904983">
    <property type="term" value="P:glycine import into mitochondrion"/>
    <property type="evidence" value="ECO:0007669"/>
    <property type="project" value="UniProtKB-UniRule"/>
</dbReference>
<dbReference type="GO" id="GO:0006783">
    <property type="term" value="P:heme biosynthetic process"/>
    <property type="evidence" value="ECO:0007669"/>
    <property type="project" value="EnsemblFungi"/>
</dbReference>
<dbReference type="FunFam" id="1.50.40.10:FF:000103">
    <property type="entry name" value="Mitochondrial glycine transporter"/>
    <property type="match status" value="1"/>
</dbReference>
<dbReference type="Gene3D" id="1.50.40.10">
    <property type="entry name" value="Mitochondrial carrier domain"/>
    <property type="match status" value="1"/>
</dbReference>
<dbReference type="HAMAP" id="MF_03064">
    <property type="entry name" value="SLC25A38"/>
    <property type="match status" value="1"/>
</dbReference>
<dbReference type="InterPro" id="IPR030847">
    <property type="entry name" value="Hem25/SLC25A38"/>
</dbReference>
<dbReference type="InterPro" id="IPR018108">
    <property type="entry name" value="Mitochondrial_sb/sol_carrier"/>
</dbReference>
<dbReference type="InterPro" id="IPR023395">
    <property type="entry name" value="Mt_carrier_dom_sf"/>
</dbReference>
<dbReference type="PANTHER" id="PTHR46181">
    <property type="entry name" value="MITOCHONDRIAL GLYCINE TRANSPORTER"/>
    <property type="match status" value="1"/>
</dbReference>
<dbReference type="PANTHER" id="PTHR46181:SF3">
    <property type="entry name" value="MITOCHONDRIAL GLYCINE TRANSPORTER"/>
    <property type="match status" value="1"/>
</dbReference>
<dbReference type="Pfam" id="PF00153">
    <property type="entry name" value="Mito_carr"/>
    <property type="match status" value="3"/>
</dbReference>
<dbReference type="SUPFAM" id="SSF103506">
    <property type="entry name" value="Mitochondrial carrier"/>
    <property type="match status" value="1"/>
</dbReference>
<dbReference type="PROSITE" id="PS50920">
    <property type="entry name" value="SOLCAR"/>
    <property type="match status" value="3"/>
</dbReference>
<accession>B0Y4J4</accession>
<reference key="1">
    <citation type="journal article" date="2008" name="PLoS Genet.">
        <title>Genomic islands in the pathogenic filamentous fungus Aspergillus fumigatus.</title>
        <authorList>
            <person name="Fedorova N.D."/>
            <person name="Khaldi N."/>
            <person name="Joardar V.S."/>
            <person name="Maiti R."/>
            <person name="Amedeo P."/>
            <person name="Anderson M.J."/>
            <person name="Crabtree J."/>
            <person name="Silva J.C."/>
            <person name="Badger J.H."/>
            <person name="Albarraq A."/>
            <person name="Angiuoli S."/>
            <person name="Bussey H."/>
            <person name="Bowyer P."/>
            <person name="Cotty P.J."/>
            <person name="Dyer P.S."/>
            <person name="Egan A."/>
            <person name="Galens K."/>
            <person name="Fraser-Liggett C.M."/>
            <person name="Haas B.J."/>
            <person name="Inman J.M."/>
            <person name="Kent R."/>
            <person name="Lemieux S."/>
            <person name="Malavazi I."/>
            <person name="Orvis J."/>
            <person name="Roemer T."/>
            <person name="Ronning C.M."/>
            <person name="Sundaram J.P."/>
            <person name="Sutton G."/>
            <person name="Turner G."/>
            <person name="Venter J.C."/>
            <person name="White O.R."/>
            <person name="Whitty B.R."/>
            <person name="Youngman P."/>
            <person name="Wolfe K.H."/>
            <person name="Goldman G.H."/>
            <person name="Wortman J.R."/>
            <person name="Jiang B."/>
            <person name="Denning D.W."/>
            <person name="Nierman W.C."/>
        </authorList>
    </citation>
    <scope>NUCLEOTIDE SEQUENCE [LARGE SCALE GENOMIC DNA]</scope>
    <source>
        <strain>CBS 144.89 / FGSC A1163 / CEA10</strain>
    </source>
</reference>
<keyword id="KW-0472">Membrane</keyword>
<keyword id="KW-0496">Mitochondrion</keyword>
<keyword id="KW-0999">Mitochondrion inner membrane</keyword>
<keyword id="KW-0677">Repeat</keyword>
<keyword id="KW-0812">Transmembrane</keyword>
<keyword id="KW-1133">Transmembrane helix</keyword>
<keyword id="KW-0813">Transport</keyword>
<protein>
    <recommendedName>
        <fullName evidence="2">Mitochondrial glycine transporter</fullName>
    </recommendedName>
    <alternativeName>
        <fullName evidence="2">Solute carrier family 25 member 38 homolog</fullName>
    </alternativeName>
</protein>
<feature type="chain" id="PRO_0000378925" description="Mitochondrial glycine transporter">
    <location>
        <begin position="1"/>
        <end position="320"/>
    </location>
</feature>
<feature type="transmembrane region" description="Helical; Name=1" evidence="2">
    <location>
        <begin position="14"/>
        <end position="39"/>
    </location>
</feature>
<feature type="transmembrane region" description="Helical; Name=2" evidence="2">
    <location>
        <begin position="67"/>
        <end position="93"/>
    </location>
</feature>
<feature type="transmembrane region" description="Helical; Name=3" evidence="2">
    <location>
        <begin position="127"/>
        <end position="152"/>
    </location>
</feature>
<feature type="transmembrane region" description="Helical; Name=4" evidence="2">
    <location>
        <begin position="180"/>
        <end position="203"/>
    </location>
</feature>
<feature type="transmembrane region" description="Helical; Name=5" evidence="2">
    <location>
        <begin position="227"/>
        <end position="253"/>
    </location>
</feature>
<feature type="transmembrane region" description="Helical; Name=6" evidence="2">
    <location>
        <begin position="282"/>
        <end position="300"/>
    </location>
</feature>
<feature type="repeat" description="Solcar 1" evidence="2">
    <location>
        <begin position="8"/>
        <end position="92"/>
    </location>
</feature>
<feature type="repeat" description="Solcar 2" evidence="2">
    <location>
        <begin position="121"/>
        <end position="205"/>
    </location>
</feature>
<feature type="repeat" description="Solcar 3" evidence="2">
    <location>
        <begin position="223"/>
        <end position="307"/>
    </location>
</feature>
<comment type="function">
    <text evidence="2">Mitochondrial glycine transporter that imports glycine into the mitochondrial matrix. Plays an important role in providing glycine for the first enzymatic step in heme biosynthesis, the condensation of glycine with succinyl-CoA to produce 5-aminolevulinate (ALA) in the mitochondrial matrix.</text>
</comment>
<comment type="catalytic activity">
    <reaction evidence="1">
        <text>glycine(in) = glycine(out)</text>
        <dbReference type="Rhea" id="RHEA:70715"/>
        <dbReference type="ChEBI" id="CHEBI:57305"/>
    </reaction>
</comment>
<comment type="subcellular location">
    <subcellularLocation>
        <location evidence="2">Mitochondrion inner membrane</location>
        <topology evidence="2">Multi-pass membrane protein</topology>
    </subcellularLocation>
</comment>
<comment type="similarity">
    <text evidence="2">Belongs to the mitochondrial carrier (TC 2.A.29) family. SLC25A38 subfamily.</text>
</comment>
<evidence type="ECO:0000250" key="1">
    <source>
        <dbReference type="UniProtKB" id="Q96DW6"/>
    </source>
</evidence>
<evidence type="ECO:0000255" key="2">
    <source>
        <dbReference type="HAMAP-Rule" id="MF_03064"/>
    </source>
</evidence>
<gene>
    <name type="ORF">AFUB_069300</name>
</gene>
<name>S2538_ASPFC</name>
<organism>
    <name type="scientific">Aspergillus fumigatus (strain CBS 144.89 / FGSC A1163 / CEA10)</name>
    <name type="common">Neosartorya fumigata</name>
    <dbReference type="NCBI Taxonomy" id="451804"/>
    <lineage>
        <taxon>Eukaryota</taxon>
        <taxon>Fungi</taxon>
        <taxon>Dikarya</taxon>
        <taxon>Ascomycota</taxon>
        <taxon>Pezizomycotina</taxon>
        <taxon>Eurotiomycetes</taxon>
        <taxon>Eurotiomycetidae</taxon>
        <taxon>Eurotiales</taxon>
        <taxon>Aspergillaceae</taxon>
        <taxon>Aspergillus</taxon>
        <taxon>Aspergillus subgen. Fumigati</taxon>
    </lineage>
</organism>